<organism>
    <name type="scientific">Drosophila simulans</name>
    <name type="common">Fruit fly</name>
    <dbReference type="NCBI Taxonomy" id="7240"/>
    <lineage>
        <taxon>Eukaryota</taxon>
        <taxon>Metazoa</taxon>
        <taxon>Ecdysozoa</taxon>
        <taxon>Arthropoda</taxon>
        <taxon>Hexapoda</taxon>
        <taxon>Insecta</taxon>
        <taxon>Pterygota</taxon>
        <taxon>Neoptera</taxon>
        <taxon>Endopterygota</taxon>
        <taxon>Diptera</taxon>
        <taxon>Brachycera</taxon>
        <taxon>Muscomorpha</taxon>
        <taxon>Ephydroidea</taxon>
        <taxon>Drosophilidae</taxon>
        <taxon>Drosophila</taxon>
        <taxon>Sophophora</taxon>
    </lineage>
</organism>
<sequence length="492" mass="55720">MCMEAEPPSPPAQQQEQVNPPLCKAQNPKPARLYRLVLLFVAGSLAAWTFHALSSTNLVWKLRQLHHLPTAHYLQTRDEFALYSVEELNAFKEFYDKSVSDSVGASYTEAEQTNIKEALGALRMAQDLYLAGKDDKAARLFEHALALAPRHPEVLLRYGEFLEHNQRNIVLADQYYFQALTISPSNSEALANRQRTADVVQSLDERRLESLDSKRDALSAIHESNGALRRAKKEAYFQHIYHSVGIEGNTMTLAQTRSILETRMAVDGKSIDEHNEILGMDLAMKYINASLVQKIDITIKDILELHRRVLGHVDPIEGGEFRRNQVYVGGHIPPGPGDLALLMQRFERWLNSEHSSTLHPVNYAALAHYKLVHIHPFVDGNGRTSRLLMNTLLMRAGYPPVIIPKQQRSKYYHFLKLANEGDIRPFVRFIADCTEKTLDLYLWATSDLPQQIPMLIQTESEAGERLAQMQSPNVAQRSSILEFYESGSGDIP</sequence>
<evidence type="ECO:0000250" key="1">
    <source>
        <dbReference type="UniProtKB" id="A0A061I403"/>
    </source>
</evidence>
<evidence type="ECO:0000250" key="2">
    <source>
        <dbReference type="UniProtKB" id="Q8SWV6"/>
    </source>
</evidence>
<evidence type="ECO:0000250" key="3">
    <source>
        <dbReference type="UniProtKB" id="Q9BVA6"/>
    </source>
</evidence>
<evidence type="ECO:0000255" key="4"/>
<evidence type="ECO:0000255" key="5">
    <source>
        <dbReference type="PROSITE-ProRule" id="PRU00791"/>
    </source>
</evidence>
<evidence type="ECO:0000256" key="6">
    <source>
        <dbReference type="SAM" id="MobiDB-lite"/>
    </source>
</evidence>
<evidence type="ECO:0000305" key="7"/>
<protein>
    <recommendedName>
        <fullName>Protein adenylyltransferase Fic</fullName>
        <ecNumber evidence="2">2.7.7.108</ecNumber>
    </recommendedName>
    <alternativeName>
        <fullName evidence="7">De-AMPylase Fic</fullName>
        <ecNumber evidence="1 2">3.1.4.-</ecNumber>
    </alternativeName>
</protein>
<proteinExistence type="inferred from homology"/>
<comment type="function">
    <text evidence="1 2">Protein that can both mediate the addition of adenosine 5'-monophosphate (AMP) to specific residues of target proteins (AMPylation), and the removal of the same modification from target proteins (de-AMPylation), depending on the context (By similarity). The side chain of Glu-247 determines which of the two opposing activities (AMPylase or de-AMPylase) will take place (By similarity). Acts as a key regulator of the unfolded protein response (UPR) by mediating AMPylation or de-AMPylation of Hsc70-3/BiP. In unstressed cells, acts as an adenylyltransferase by mediating AMPylation of Hsc70-3/BiP at 'Thr-518', thereby inactivating it. In response to endoplasmic reticulum stress, acts as a phosphodiesterase by mediating removal of ATP (de-AMPylation) from Hsc70-3/BiP at 'Thr-518', leading to restore HSPA5/BiP activity (By similarity).</text>
</comment>
<comment type="catalytic activity">
    <reaction evidence="3">
        <text>L-tyrosyl-[protein] + ATP = O-(5'-adenylyl)-L-tyrosyl-[protein] + diphosphate</text>
        <dbReference type="Rhea" id="RHEA:54288"/>
        <dbReference type="Rhea" id="RHEA-COMP:10136"/>
        <dbReference type="Rhea" id="RHEA-COMP:13846"/>
        <dbReference type="ChEBI" id="CHEBI:30616"/>
        <dbReference type="ChEBI" id="CHEBI:33019"/>
        <dbReference type="ChEBI" id="CHEBI:46858"/>
        <dbReference type="ChEBI" id="CHEBI:83624"/>
        <dbReference type="EC" id="2.7.7.108"/>
    </reaction>
</comment>
<comment type="catalytic activity">
    <reaction evidence="2">
        <text>L-threonyl-[protein] + ATP = 3-O-(5'-adenylyl)-L-threonyl-[protein] + diphosphate</text>
        <dbReference type="Rhea" id="RHEA:54292"/>
        <dbReference type="Rhea" id="RHEA-COMP:11060"/>
        <dbReference type="Rhea" id="RHEA-COMP:13847"/>
        <dbReference type="ChEBI" id="CHEBI:30013"/>
        <dbReference type="ChEBI" id="CHEBI:30616"/>
        <dbReference type="ChEBI" id="CHEBI:33019"/>
        <dbReference type="ChEBI" id="CHEBI:138113"/>
        <dbReference type="EC" id="2.7.7.108"/>
    </reaction>
</comment>
<comment type="catalytic activity">
    <reaction evidence="2">
        <text>3-O-(5'-adenylyl)-L-threonyl-[protein] + H2O = L-threonyl-[protein] + AMP + H(+)</text>
        <dbReference type="Rhea" id="RHEA:55932"/>
        <dbReference type="Rhea" id="RHEA-COMP:11060"/>
        <dbReference type="Rhea" id="RHEA-COMP:13847"/>
        <dbReference type="ChEBI" id="CHEBI:15377"/>
        <dbReference type="ChEBI" id="CHEBI:15378"/>
        <dbReference type="ChEBI" id="CHEBI:30013"/>
        <dbReference type="ChEBI" id="CHEBI:138113"/>
        <dbReference type="ChEBI" id="CHEBI:456215"/>
    </reaction>
</comment>
<comment type="activity regulation">
    <text evidence="1 3">The side chain of Glu-247 determines which of the two opposing activities (AMPylase or de-AMPylase) will take place. In response to endoplasmic reticulum stress, mediates de-AMPylase activity (By similarity). Adenylyltransferase activity is inhibited by the inhibitory helix present at the N-terminus: Glu-247 binds ATP and competes with ATP-binding at Arg-386, thereby preventing adenylyltransferase activity (By similarity). In unstressed cells, disengagement of Glu-247 promotes adenylyltransferase activity (By similarity). Activation dissociates ATP-binding from Glu-247, allowing ordered binding of the entire ATP moiety with the alpha-phosphate in an orientation that is productive for accepting an incoming target hydroxyl side chain (By similarity).</text>
</comment>
<comment type="subunit">
    <text evidence="2">Homodimer.</text>
</comment>
<comment type="subcellular location">
    <subcellularLocation>
        <location evidence="2">Membrane</location>
        <topology evidence="2">Single-pass membrane protein</topology>
    </subcellularLocation>
</comment>
<comment type="domain">
    <text evidence="3">The fido domain mediates the adenylyltransferase activity.</text>
</comment>
<comment type="similarity">
    <text evidence="7">Belongs to the fic family.</text>
</comment>
<name>FICD_DROSI</name>
<keyword id="KW-0067">ATP-binding</keyword>
<keyword id="KW-0378">Hydrolase</keyword>
<keyword id="KW-0472">Membrane</keyword>
<keyword id="KW-0547">Nucleotide-binding</keyword>
<keyword id="KW-0548">Nucleotidyltransferase</keyword>
<keyword id="KW-1185">Reference proteome</keyword>
<keyword id="KW-0677">Repeat</keyword>
<keyword id="KW-0802">TPR repeat</keyword>
<keyword id="KW-0808">Transferase</keyword>
<keyword id="KW-0812">Transmembrane</keyword>
<keyword id="KW-1133">Transmembrane helix</keyword>
<dbReference type="EC" id="2.7.7.108" evidence="2"/>
<dbReference type="EC" id="3.1.4.-" evidence="1 2"/>
<dbReference type="EMBL" id="CM000361">
    <property type="protein sequence ID" value="EDX03954.1"/>
    <property type="molecule type" value="Genomic_DNA"/>
</dbReference>
<dbReference type="SMR" id="B4Q4M7"/>
<dbReference type="STRING" id="7240.B4Q4M7"/>
<dbReference type="HOGENOM" id="CLU_040460_0_0_1"/>
<dbReference type="OMA" id="QLRCQLW"/>
<dbReference type="OrthoDB" id="439046at2759"/>
<dbReference type="PhylomeDB" id="B4Q4M7"/>
<dbReference type="Proteomes" id="UP000000304">
    <property type="component" value="Chromosome 2L"/>
</dbReference>
<dbReference type="GO" id="GO:0005886">
    <property type="term" value="C:plasma membrane"/>
    <property type="evidence" value="ECO:0007669"/>
    <property type="project" value="EnsemblMetazoa"/>
</dbReference>
<dbReference type="GO" id="GO:0070733">
    <property type="term" value="F:AMPylase activity"/>
    <property type="evidence" value="ECO:0000250"/>
    <property type="project" value="UniProtKB"/>
</dbReference>
<dbReference type="GO" id="GO:0005524">
    <property type="term" value="F:ATP binding"/>
    <property type="evidence" value="ECO:0007669"/>
    <property type="project" value="UniProtKB-KW"/>
</dbReference>
<dbReference type="GO" id="GO:0030544">
    <property type="term" value="F:Hsp70 protein binding"/>
    <property type="evidence" value="ECO:0007669"/>
    <property type="project" value="EnsemblMetazoa"/>
</dbReference>
<dbReference type="GO" id="GO:0044603">
    <property type="term" value="F:protein adenylylhydrolase activity"/>
    <property type="evidence" value="ECO:0007669"/>
    <property type="project" value="EnsemblMetazoa"/>
</dbReference>
<dbReference type="GO" id="GO:0042803">
    <property type="term" value="F:protein homodimerization activity"/>
    <property type="evidence" value="ECO:0007669"/>
    <property type="project" value="EnsemblMetazoa"/>
</dbReference>
<dbReference type="GO" id="GO:0050908">
    <property type="term" value="P:detection of light stimulus involved in visual perception"/>
    <property type="evidence" value="ECO:0007669"/>
    <property type="project" value="EnsemblMetazoa"/>
</dbReference>
<dbReference type="GO" id="GO:0051608">
    <property type="term" value="P:histamine transport"/>
    <property type="evidence" value="ECO:0007669"/>
    <property type="project" value="EnsemblMetazoa"/>
</dbReference>
<dbReference type="GO" id="GO:0018117">
    <property type="term" value="P:protein adenylylation"/>
    <property type="evidence" value="ECO:0000250"/>
    <property type="project" value="UniProtKB"/>
</dbReference>
<dbReference type="GO" id="GO:0034976">
    <property type="term" value="P:response to endoplasmic reticulum stress"/>
    <property type="evidence" value="ECO:0007669"/>
    <property type="project" value="EnsemblMetazoa"/>
</dbReference>
<dbReference type="GO" id="GO:0007632">
    <property type="term" value="P:visual behavior"/>
    <property type="evidence" value="ECO:0007669"/>
    <property type="project" value="EnsemblMetazoa"/>
</dbReference>
<dbReference type="FunFam" id="1.10.3290.10:FF:000001">
    <property type="entry name" value="adenosine monophosphate-protein transferase FICD"/>
    <property type="match status" value="1"/>
</dbReference>
<dbReference type="FunFam" id="1.25.40.10:FF:000522">
    <property type="entry name" value="Protein adenylyltransferase Fic"/>
    <property type="match status" value="1"/>
</dbReference>
<dbReference type="Gene3D" id="1.10.3290.10">
    <property type="entry name" value="Fido-like domain"/>
    <property type="match status" value="1"/>
</dbReference>
<dbReference type="Gene3D" id="1.25.40.10">
    <property type="entry name" value="Tetratricopeptide repeat domain"/>
    <property type="match status" value="1"/>
</dbReference>
<dbReference type="InterPro" id="IPR003812">
    <property type="entry name" value="Fido"/>
</dbReference>
<dbReference type="InterPro" id="IPR036597">
    <property type="entry name" value="Fido-like_dom_sf"/>
</dbReference>
<dbReference type="InterPro" id="IPR040198">
    <property type="entry name" value="Fido_containing"/>
</dbReference>
<dbReference type="InterPro" id="IPR011990">
    <property type="entry name" value="TPR-like_helical_dom_sf"/>
</dbReference>
<dbReference type="PANTHER" id="PTHR13504">
    <property type="entry name" value="FIDO DOMAIN-CONTAINING PROTEIN DDB_G0283145"/>
    <property type="match status" value="1"/>
</dbReference>
<dbReference type="PANTHER" id="PTHR13504:SF34">
    <property type="entry name" value="PROTEIN ADENYLYLTRANSFERASE FICD"/>
    <property type="match status" value="1"/>
</dbReference>
<dbReference type="Pfam" id="PF02661">
    <property type="entry name" value="Fic"/>
    <property type="match status" value="1"/>
</dbReference>
<dbReference type="SUPFAM" id="SSF140931">
    <property type="entry name" value="Fic-like"/>
    <property type="match status" value="1"/>
</dbReference>
<dbReference type="SUPFAM" id="SSF48452">
    <property type="entry name" value="TPR-like"/>
    <property type="match status" value="1"/>
</dbReference>
<dbReference type="PROSITE" id="PS51459">
    <property type="entry name" value="FIDO"/>
    <property type="match status" value="1"/>
</dbReference>
<dbReference type="PROSITE" id="PS50293">
    <property type="entry name" value="TPR_REGION"/>
    <property type="match status" value="1"/>
</dbReference>
<accession>B4Q4M7</accession>
<feature type="chain" id="PRO_0000381790" description="Protein adenylyltransferase Fic">
    <location>
        <begin position="1"/>
        <end position="492"/>
    </location>
</feature>
<feature type="transmembrane region" description="Helical" evidence="4">
    <location>
        <begin position="33"/>
        <end position="55"/>
    </location>
</feature>
<feature type="repeat" description="TPR 1">
    <location>
        <begin position="118"/>
        <end position="151"/>
    </location>
</feature>
<feature type="repeat" description="TPR 2">
    <location>
        <begin position="152"/>
        <end position="186"/>
    </location>
</feature>
<feature type="domain" description="Fido" evidence="5">
    <location>
        <begin position="297"/>
        <end position="432"/>
    </location>
</feature>
<feature type="region of interest" description="Disordered" evidence="6">
    <location>
        <begin position="1"/>
        <end position="21"/>
    </location>
</feature>
<feature type="short sequence motif" description="Inhibitory (S/T)XXXE(G/N) motif">
    <location>
        <begin position="243"/>
        <end position="248"/>
    </location>
</feature>
<feature type="compositionally biased region" description="Low complexity" evidence="6">
    <location>
        <begin position="1"/>
        <end position="17"/>
    </location>
</feature>
<feature type="active site" evidence="1">
    <location>
        <position position="375"/>
    </location>
</feature>
<feature type="binding site" evidence="3">
    <location>
        <position position="247"/>
    </location>
    <ligand>
        <name>ATP</name>
        <dbReference type="ChEBI" id="CHEBI:30616"/>
    </ligand>
</feature>
<feature type="binding site" evidence="3">
    <location>
        <begin position="328"/>
        <end position="331"/>
    </location>
    <ligand>
        <name>ATP</name>
        <dbReference type="ChEBI" id="CHEBI:30616"/>
    </ligand>
</feature>
<feature type="binding site" evidence="3">
    <location>
        <begin position="379"/>
        <end position="386"/>
    </location>
    <ligand>
        <name>ATP</name>
        <dbReference type="ChEBI" id="CHEBI:30616"/>
    </ligand>
</feature>
<feature type="binding site" evidence="3">
    <location>
        <begin position="411"/>
        <end position="412"/>
    </location>
    <ligand>
        <name>ATP</name>
        <dbReference type="ChEBI" id="CHEBI:30616"/>
    </ligand>
</feature>
<feature type="binding site" evidence="3">
    <location>
        <position position="419"/>
    </location>
    <ligand>
        <name>ATP</name>
        <dbReference type="ChEBI" id="CHEBI:30616"/>
    </ligand>
</feature>
<feature type="site" description="Important for autoinhibition of adenylyltransferase activity" evidence="3">
    <location>
        <position position="247"/>
    </location>
</feature>
<gene>
    <name type="ORF">GD23409</name>
</gene>
<reference key="1">
    <citation type="journal article" date="2007" name="Nature">
        <title>Evolution of genes and genomes on the Drosophila phylogeny.</title>
        <authorList>
            <consortium name="Drosophila 12 genomes consortium"/>
        </authorList>
    </citation>
    <scope>NUCLEOTIDE SEQUENCE [LARGE SCALE GENOMIC DNA]</scope>
</reference>